<protein>
    <recommendedName>
        <fullName evidence="1">Putative pre-16S rRNA nuclease</fullName>
        <ecNumber evidence="1">3.1.-.-</ecNumber>
    </recommendedName>
</protein>
<organism>
    <name type="scientific">Oleidesulfovibrio alaskensis (strain ATCC BAA-1058 / DSM 17464 / G20)</name>
    <name type="common">Desulfovibrio alaskensis</name>
    <dbReference type="NCBI Taxonomy" id="207559"/>
    <lineage>
        <taxon>Bacteria</taxon>
        <taxon>Pseudomonadati</taxon>
        <taxon>Thermodesulfobacteriota</taxon>
        <taxon>Desulfovibrionia</taxon>
        <taxon>Desulfovibrionales</taxon>
        <taxon>Desulfovibrionaceae</taxon>
        <taxon>Oleidesulfovibrio</taxon>
    </lineage>
</organism>
<evidence type="ECO:0000255" key="1">
    <source>
        <dbReference type="HAMAP-Rule" id="MF_00651"/>
    </source>
</evidence>
<sequence length="144" mass="16028">MKYLGIDYGTRRTGIAVTDGAGMMAFPRRTIVMSTRDAFFAELLSVVEEERPAGVVVGLPLLAGGEETLITRQVRNFVARLRRRSSLPVYLVAEELSSFEAGEDLREAGLSFREREAVVDQQAAVRILESFLNLPEDRRIPLEG</sequence>
<comment type="function">
    <text evidence="1">Could be a nuclease involved in processing of the 5'-end of pre-16S rRNA.</text>
</comment>
<comment type="subcellular location">
    <subcellularLocation>
        <location evidence="1">Cytoplasm</location>
    </subcellularLocation>
</comment>
<comment type="similarity">
    <text evidence="1">Belongs to the YqgF nuclease family.</text>
</comment>
<gene>
    <name type="ordered locus">Dde_0314</name>
</gene>
<reference key="1">
    <citation type="journal article" date="2011" name="J. Bacteriol.">
        <title>Complete genome sequence and updated annotation of Desulfovibrio alaskensis G20.</title>
        <authorList>
            <person name="Hauser L.J."/>
            <person name="Land M.L."/>
            <person name="Brown S.D."/>
            <person name="Larimer F."/>
            <person name="Keller K.L."/>
            <person name="Rapp-Giles B.J."/>
            <person name="Price M.N."/>
            <person name="Lin M."/>
            <person name="Bruce D.C."/>
            <person name="Detter J.C."/>
            <person name="Tapia R."/>
            <person name="Han C.S."/>
            <person name="Goodwin L.A."/>
            <person name="Cheng J.F."/>
            <person name="Pitluck S."/>
            <person name="Copeland A."/>
            <person name="Lucas S."/>
            <person name="Nolan M."/>
            <person name="Lapidus A.L."/>
            <person name="Palumbo A.V."/>
            <person name="Wall J.D."/>
        </authorList>
    </citation>
    <scope>NUCLEOTIDE SEQUENCE [LARGE SCALE GENOMIC DNA]</scope>
    <source>
        <strain>ATCC BAA-1058 / DSM 17464 / G20</strain>
    </source>
</reference>
<feature type="chain" id="PRO_0000257530" description="Putative pre-16S rRNA nuclease">
    <location>
        <begin position="1"/>
        <end position="144"/>
    </location>
</feature>
<accession>Q316N1</accession>
<proteinExistence type="inferred from homology"/>
<dbReference type="EC" id="3.1.-.-" evidence="1"/>
<dbReference type="EMBL" id="CP000112">
    <property type="protein sequence ID" value="ABB37115.1"/>
    <property type="molecule type" value="Genomic_DNA"/>
</dbReference>
<dbReference type="RefSeq" id="WP_011366457.1">
    <property type="nucleotide sequence ID" value="NC_007519.1"/>
</dbReference>
<dbReference type="SMR" id="Q316N1"/>
<dbReference type="STRING" id="207559.Dde_0314"/>
<dbReference type="KEGG" id="dde:Dde_0314"/>
<dbReference type="eggNOG" id="COG0816">
    <property type="taxonomic scope" value="Bacteria"/>
</dbReference>
<dbReference type="HOGENOM" id="CLU_098240_2_2_7"/>
<dbReference type="Proteomes" id="UP000002710">
    <property type="component" value="Chromosome"/>
</dbReference>
<dbReference type="GO" id="GO:0005829">
    <property type="term" value="C:cytosol"/>
    <property type="evidence" value="ECO:0007669"/>
    <property type="project" value="TreeGrafter"/>
</dbReference>
<dbReference type="GO" id="GO:0004518">
    <property type="term" value="F:nuclease activity"/>
    <property type="evidence" value="ECO:0007669"/>
    <property type="project" value="UniProtKB-KW"/>
</dbReference>
<dbReference type="GO" id="GO:0000967">
    <property type="term" value="P:rRNA 5'-end processing"/>
    <property type="evidence" value="ECO:0007669"/>
    <property type="project" value="UniProtKB-UniRule"/>
</dbReference>
<dbReference type="CDD" id="cd16964">
    <property type="entry name" value="YqgF"/>
    <property type="match status" value="1"/>
</dbReference>
<dbReference type="Gene3D" id="3.30.420.140">
    <property type="entry name" value="YqgF/RNase H-like domain"/>
    <property type="match status" value="1"/>
</dbReference>
<dbReference type="HAMAP" id="MF_00651">
    <property type="entry name" value="Nuclease_YqgF"/>
    <property type="match status" value="1"/>
</dbReference>
<dbReference type="InterPro" id="IPR012337">
    <property type="entry name" value="RNaseH-like_sf"/>
</dbReference>
<dbReference type="InterPro" id="IPR005227">
    <property type="entry name" value="YqgF"/>
</dbReference>
<dbReference type="InterPro" id="IPR006641">
    <property type="entry name" value="YqgF/RNaseH-like_dom"/>
</dbReference>
<dbReference type="InterPro" id="IPR037027">
    <property type="entry name" value="YqgF/RNaseH-like_dom_sf"/>
</dbReference>
<dbReference type="NCBIfam" id="TIGR00250">
    <property type="entry name" value="RNAse_H_YqgF"/>
    <property type="match status" value="1"/>
</dbReference>
<dbReference type="PANTHER" id="PTHR33317">
    <property type="entry name" value="POLYNUCLEOTIDYL TRANSFERASE, RIBONUCLEASE H-LIKE SUPERFAMILY PROTEIN"/>
    <property type="match status" value="1"/>
</dbReference>
<dbReference type="PANTHER" id="PTHR33317:SF4">
    <property type="entry name" value="POLYNUCLEOTIDYL TRANSFERASE, RIBONUCLEASE H-LIKE SUPERFAMILY PROTEIN"/>
    <property type="match status" value="1"/>
</dbReference>
<dbReference type="Pfam" id="PF03652">
    <property type="entry name" value="RuvX"/>
    <property type="match status" value="1"/>
</dbReference>
<dbReference type="SMART" id="SM00732">
    <property type="entry name" value="YqgFc"/>
    <property type="match status" value="1"/>
</dbReference>
<dbReference type="SUPFAM" id="SSF53098">
    <property type="entry name" value="Ribonuclease H-like"/>
    <property type="match status" value="1"/>
</dbReference>
<name>YQGF_OLEA2</name>
<keyword id="KW-0963">Cytoplasm</keyword>
<keyword id="KW-0378">Hydrolase</keyword>
<keyword id="KW-0540">Nuclease</keyword>
<keyword id="KW-1185">Reference proteome</keyword>
<keyword id="KW-0690">Ribosome biogenesis</keyword>